<name>PSBN_TAXBR</name>
<comment type="function">
    <text evidence="1">May play a role in photosystem I and II biogenesis.</text>
</comment>
<comment type="subcellular location">
    <subcellularLocation>
        <location evidence="1">Plastid</location>
        <location evidence="1">Chloroplast thylakoid membrane</location>
        <topology evidence="1">Single-pass membrane protein</topology>
    </subcellularLocation>
</comment>
<comment type="similarity">
    <text evidence="1">Belongs to the PsbN family.</text>
</comment>
<comment type="caution">
    <text evidence="1">Originally thought to be a component of PSII; based on experiments in Synechocystis, N.tabacum and barley, and its absence from PSII in T.elongatus and T.vulcanus, this is probably not true.</text>
</comment>
<reference key="1">
    <citation type="submission" date="2002-07" db="EMBL/GenBank/DDBJ databases">
        <title>Parsing out signal and noise for seed-plant phylogenetic inference.</title>
        <authorList>
            <person name="Graham S.W."/>
            <person name="Rai H.S."/>
            <person name="Ikegami K."/>
            <person name="Reeves P.A."/>
            <person name="Olmstead R.G."/>
        </authorList>
    </citation>
    <scope>NUCLEOTIDE SEQUENCE [GENOMIC DNA]</scope>
</reference>
<protein>
    <recommendedName>
        <fullName evidence="1">Protein PsbN</fullName>
    </recommendedName>
</protein>
<proteinExistence type="inferred from homology"/>
<geneLocation type="chloroplast"/>
<sequence length="43" mass="4834">METATLVAISISRLLVSFTGYALYTAFGQPSEQLRDPFEEHED</sequence>
<dbReference type="EMBL" id="AF528916">
    <property type="protein sequence ID" value="AAQ09450.1"/>
    <property type="molecule type" value="Genomic_DNA"/>
</dbReference>
<dbReference type="RefSeq" id="YP_009578763.1">
    <property type="nucleotide sequence ID" value="NC_041502.1"/>
</dbReference>
<dbReference type="SMR" id="Q6EYC3"/>
<dbReference type="GeneID" id="39704588"/>
<dbReference type="GO" id="GO:0009535">
    <property type="term" value="C:chloroplast thylakoid membrane"/>
    <property type="evidence" value="ECO:0007669"/>
    <property type="project" value="UniProtKB-SubCell"/>
</dbReference>
<dbReference type="GO" id="GO:0015979">
    <property type="term" value="P:photosynthesis"/>
    <property type="evidence" value="ECO:0007669"/>
    <property type="project" value="InterPro"/>
</dbReference>
<dbReference type="HAMAP" id="MF_00293">
    <property type="entry name" value="PSII_PsbN"/>
    <property type="match status" value="1"/>
</dbReference>
<dbReference type="InterPro" id="IPR003398">
    <property type="entry name" value="PSII_PsbN"/>
</dbReference>
<dbReference type="PANTHER" id="PTHR35326">
    <property type="entry name" value="PROTEIN PSBN"/>
    <property type="match status" value="1"/>
</dbReference>
<dbReference type="PANTHER" id="PTHR35326:SF3">
    <property type="entry name" value="PROTEIN PSBN"/>
    <property type="match status" value="1"/>
</dbReference>
<dbReference type="Pfam" id="PF02468">
    <property type="entry name" value="PsbN"/>
    <property type="match status" value="1"/>
</dbReference>
<accession>Q6EYC3</accession>
<keyword id="KW-0150">Chloroplast</keyword>
<keyword id="KW-0472">Membrane</keyword>
<keyword id="KW-0934">Plastid</keyword>
<keyword id="KW-0793">Thylakoid</keyword>
<keyword id="KW-0812">Transmembrane</keyword>
<keyword id="KW-1133">Transmembrane helix</keyword>
<gene>
    <name evidence="1" type="primary">psbN</name>
</gene>
<feature type="chain" id="PRO_0000207963" description="Protein PsbN">
    <location>
        <begin position="1"/>
        <end position="43"/>
    </location>
</feature>
<feature type="transmembrane region" description="Helical" evidence="1">
    <location>
        <begin position="5"/>
        <end position="27"/>
    </location>
</feature>
<organism>
    <name type="scientific">Taxus brevifolia</name>
    <name type="common">Pacific yew</name>
    <dbReference type="NCBI Taxonomy" id="46220"/>
    <lineage>
        <taxon>Eukaryota</taxon>
        <taxon>Viridiplantae</taxon>
        <taxon>Streptophyta</taxon>
        <taxon>Embryophyta</taxon>
        <taxon>Tracheophyta</taxon>
        <taxon>Spermatophyta</taxon>
        <taxon>Pinopsida</taxon>
        <taxon>Pinidae</taxon>
        <taxon>Conifers II</taxon>
        <taxon>Cupressales</taxon>
        <taxon>Taxaceae</taxon>
        <taxon>Taxus</taxon>
    </lineage>
</organism>
<evidence type="ECO:0000255" key="1">
    <source>
        <dbReference type="HAMAP-Rule" id="MF_00293"/>
    </source>
</evidence>